<accession>P01768</accession>
<accession>A0A0B4J2B7</accession>
<accession>P01769</accession>
<accession>P01770</accession>
<accession>P01773</accession>
<proteinExistence type="evidence at protein level"/>
<reference key="1">
    <citation type="journal article" date="2003" name="Nature">
        <title>The DNA sequence and analysis of human chromosome 14.</title>
        <authorList>
            <person name="Heilig R."/>
            <person name="Eckenberg R."/>
            <person name="Petit J.-L."/>
            <person name="Fonknechten N."/>
            <person name="Da Silva C."/>
            <person name="Cattolico L."/>
            <person name="Levy M."/>
            <person name="Barbe V."/>
            <person name="De Berardinis V."/>
            <person name="Ureta-Vidal A."/>
            <person name="Pelletier E."/>
            <person name="Vico V."/>
            <person name="Anthouard V."/>
            <person name="Rowen L."/>
            <person name="Madan A."/>
            <person name="Qin S."/>
            <person name="Sun H."/>
            <person name="Du H."/>
            <person name="Pepin K."/>
            <person name="Artiguenave F."/>
            <person name="Robert C."/>
            <person name="Cruaud C."/>
            <person name="Bruels T."/>
            <person name="Jaillon O."/>
            <person name="Friedlander L."/>
            <person name="Samson G."/>
            <person name="Brottier P."/>
            <person name="Cure S."/>
            <person name="Segurens B."/>
            <person name="Aniere F."/>
            <person name="Samain S."/>
            <person name="Crespeau H."/>
            <person name="Abbasi N."/>
            <person name="Aiach N."/>
            <person name="Boscus D."/>
            <person name="Dickhoff R."/>
            <person name="Dors M."/>
            <person name="Dubois I."/>
            <person name="Friedman C."/>
            <person name="Gouyvenoux M."/>
            <person name="James R."/>
            <person name="Madan A."/>
            <person name="Mairey-Estrada B."/>
            <person name="Mangenot S."/>
            <person name="Martins N."/>
            <person name="Menard M."/>
            <person name="Oztas S."/>
            <person name="Ratcliffe A."/>
            <person name="Shaffer T."/>
            <person name="Trask B."/>
            <person name="Vacherie B."/>
            <person name="Bellemere C."/>
            <person name="Belser C."/>
            <person name="Besnard-Gonnet M."/>
            <person name="Bartol-Mavel D."/>
            <person name="Boutard M."/>
            <person name="Briez-Silla S."/>
            <person name="Combette S."/>
            <person name="Dufosse-Laurent V."/>
            <person name="Ferron C."/>
            <person name="Lechaplais C."/>
            <person name="Louesse C."/>
            <person name="Muselet D."/>
            <person name="Magdelenat G."/>
            <person name="Pateau E."/>
            <person name="Petit E."/>
            <person name="Sirvain-Trukniewicz P."/>
            <person name="Trybou A."/>
            <person name="Vega-Czarny N."/>
            <person name="Bataille E."/>
            <person name="Bluet E."/>
            <person name="Bordelais I."/>
            <person name="Dubois M."/>
            <person name="Dumont C."/>
            <person name="Guerin T."/>
            <person name="Haffray S."/>
            <person name="Hammadi R."/>
            <person name="Muanga J."/>
            <person name="Pellouin V."/>
            <person name="Robert D."/>
            <person name="Wunderle E."/>
            <person name="Gauguet G."/>
            <person name="Roy A."/>
            <person name="Sainte-Marthe L."/>
            <person name="Verdier J."/>
            <person name="Verdier-Discala C."/>
            <person name="Hillier L.W."/>
            <person name="Fulton L."/>
            <person name="McPherson J."/>
            <person name="Matsuda F."/>
            <person name="Wilson R."/>
            <person name="Scarpelli C."/>
            <person name="Gyapay G."/>
            <person name="Wincker P."/>
            <person name="Saurin W."/>
            <person name="Quetier F."/>
            <person name="Waterston R."/>
            <person name="Hood L."/>
            <person name="Weissenbach J."/>
        </authorList>
    </citation>
    <scope>NUCLEOTIDE SEQUENCE [LARGE SCALE GENOMIC DNA] (IMGT ALLELE IGHV3-30*18)</scope>
</reference>
<reference key="2">
    <citation type="journal article" date="1974" name="Biochemistry">
        <title>The switch point in mu heavy chains of human IgM immunoglobulins.</title>
        <authorList>
            <person name="Florent G."/>
            <person name="Lehman D."/>
            <person name="Putnam F.W."/>
        </authorList>
    </citation>
    <scope>PROTEIN SEQUENCE OF 20-117</scope>
    <scope>PYROGLUTAMATE FORMATION AT GLN-20</scope>
</reference>
<reference key="3">
    <citation type="journal article" date="1976" name="Hoppe-Seyler's Z. Physiol. Chem.">
        <title>The rule of antibody structure. The primary structure of a monoclonal IgG1 immunoglobulin (myeloma protein Nie). III. The chymotryptic peptides of the H-chain, alignment of the tryptic peptides and discussion of the complete structure.</title>
        <authorList>
            <person name="Ponstingl H."/>
            <person name="Hilschmann N."/>
        </authorList>
    </citation>
    <scope>PROTEIN SEQUENCE OF 20-117</scope>
    <scope>PYROGLUTAMATE FORMATION AT GLN-20</scope>
</reference>
<reference key="4">
    <citation type="journal article" date="1979" name="J. Biol. Chem.">
        <title>Primary structure of a human IgA1 immunoglobulin. IV. Streptococcal IgA1 protease, digestion, Fab and Fc fragments, and the complete amino acid sequence of the alpha 1 heavy chain.</title>
        <authorList>
            <person name="Putnam F.W."/>
            <person name="Liu Y.-S.V."/>
            <person name="Low T.L.K."/>
        </authorList>
    </citation>
    <scope>PROTEIN SEQUENCE OF 20-117</scope>
    <scope>PYROGLUTAMATE FORMATION AT GLN-20</scope>
</reference>
<reference key="5">
    <citation type="journal article" date="1980" name="Proc. Natl. Acad. Sci. U.S.A.">
        <title>Amino acid sequence of the variable region of a human mu chain: location of a possible JH segment.</title>
        <authorList>
            <person name="Lehman D.W."/>
            <person name="Putnam F.W."/>
        </authorList>
    </citation>
    <scope>PROTEIN SEQUENCE OF 20-117</scope>
    <scope>PYROGLUTAMATE FORMATION AT GLN-20</scope>
</reference>
<reference key="6">
    <citation type="journal article" date="1976" name="Hoppe-Seyler's Z. Physiol. Chem.">
        <title>Rule of antibody structure. The primary structure of a monoclonal IgG1 immunoglobulin (myeloma protein Nie), I: purification and characterization of the protein, the L- and H-chains, the cyanogen bromide cleavage products, and the disulfide bridges.</title>
        <authorList>
            <person name="Dreker L."/>
            <person name="Schwarz J."/>
            <person name="Reichel W."/>
            <person name="Hilschmann N."/>
        </authorList>
    </citation>
    <scope>DISULFIDE BOND</scope>
</reference>
<reference key="7">
    <citation type="journal article" date="2001" name="Exp. Clin. Immunogenet.">
        <title>Nomenclature of the human immunoglobulin heavy (IGH) genes.</title>
        <authorList>
            <person name="Lefranc M.P."/>
        </authorList>
    </citation>
    <scope>NOMENCLATURE</scope>
</reference>
<reference key="8">
    <citation type="book" date="2001" name="The Immunoglobulin FactsBook.">
        <title>The Immunoglobulin FactsBook.</title>
        <editorList>
            <person name="Lefranc M.P."/>
            <person name="Lefranc G."/>
        </editorList>
        <authorList>
            <person name="Lefranc M.P."/>
            <person name="Lefranc G."/>
        </authorList>
    </citation>
    <scope>NOMENCLATURE</scope>
</reference>
<reference key="9">
    <citation type="journal article" date="2007" name="Annu. Rev. Genet.">
        <title>Immunoglobulin somatic hypermutation.</title>
        <authorList>
            <person name="Teng G."/>
            <person name="Papavasiliou F.N."/>
        </authorList>
    </citation>
    <scope>REVIEW ON SOMATIC HYPERMUTATION</scope>
</reference>
<reference key="10">
    <citation type="journal article" date="2010" name="J. Allergy Clin. Immunol.">
        <title>Structure and function of immunoglobulins.</title>
        <authorList>
            <person name="Schroeder H.W. Jr."/>
            <person name="Cavacini L."/>
        </authorList>
    </citation>
    <scope>REVIEW ON IMMUNOGLOBULINS</scope>
</reference>
<reference key="11">
    <citation type="journal article" date="2012" name="Nat. Rev. Immunol.">
        <title>Molecular programming of B cell memory.</title>
        <authorList>
            <person name="McHeyzer-Williams M."/>
            <person name="Okitsu S."/>
            <person name="Wang N."/>
            <person name="McHeyzer-Williams L."/>
        </authorList>
    </citation>
    <scope>REVIEW ON FUNCTION</scope>
</reference>
<reference key="12">
    <citation type="journal article" date="2014" name="Front. Immunol.">
        <title>Immunoglobulin and T Cell Receptor Genes: IMGT((R)) and the Birth and Rise of Immunoinformatics.</title>
        <authorList>
            <person name="Lefranc M.P."/>
        </authorList>
    </citation>
    <scope>NOMENCLATURE</scope>
</reference>
<keyword id="KW-1064">Adaptive immunity</keyword>
<keyword id="KW-1003">Cell membrane</keyword>
<keyword id="KW-0903">Direct protein sequencing</keyword>
<keyword id="KW-1015">Disulfide bond</keyword>
<keyword id="KW-0391">Immunity</keyword>
<keyword id="KW-1280">Immunoglobulin</keyword>
<keyword id="KW-0393">Immunoglobulin domain</keyword>
<keyword id="KW-0472">Membrane</keyword>
<keyword id="KW-0873">Pyrrolidone carboxylic acid</keyword>
<keyword id="KW-1185">Reference proteome</keyword>
<keyword id="KW-0964">Secreted</keyword>
<keyword id="KW-0732">Signal</keyword>
<comment type="function">
    <text evidence="9 10 11 12">V region of the variable domain of immunoglobulin heavy chains that participates in the antigen recognition (PubMed:24600447). Immunoglobulins, also known as antibodies, are membrane-bound or secreted glycoproteins produced by B lymphocytes. In the recognition phase of humoral immunity, the membrane-bound immunoglobulins serve as receptors which, upon binding of a specific antigen, trigger the clonal expansion and differentiation of B lymphocytes into immunoglobulins-secreting plasma cells. Secreted immunoglobulins mediate the effector phase of humoral immunity, which results in the elimination of bound antigens (PubMed:20176268, PubMed:22158414). The antigen binding site is formed by the variable domain of one heavy chain, together with that of its associated light chain. Thus, each immunoglobulin has two antigen binding sites with remarkable affinity for a particular antigen. The variable domains are assembled by a process called V-(D)-J rearrangement and can then be subjected to somatic hypermutations which, after exposure to antigen and selection, allow affinity maturation for a particular antigen (PubMed:17576170, PubMed:20176268).</text>
</comment>
<comment type="subunit">
    <text evidence="10">Immunoglobulins are composed of two identical heavy chains and two identical light chains; disulfide-linked.</text>
</comment>
<comment type="subcellular location">
    <subcellularLocation>
        <location evidence="10 11">Secreted</location>
    </subcellularLocation>
    <subcellularLocation>
        <location evidence="10 11">Cell membrane</location>
    </subcellularLocation>
</comment>
<comment type="polymorphism">
    <text evidence="14">There are several alleles. The sequence shown is that of IMGT allele IGHV3-30*18.</text>
</comment>
<comment type="caution">
    <text evidence="14">For examples of full-length immunoglobulin heavy chains (of different isotypes) see AC P0DOX2, AC P0DOX3, AC P0DOX4, AC P0DOX5 and AC P0DOX6.</text>
</comment>
<evidence type="ECO:0000250" key="1">
    <source>
        <dbReference type="UniProtKB" id="P23083"/>
    </source>
</evidence>
<evidence type="ECO:0000255" key="2">
    <source>
        <dbReference type="PROSITE-ProRule" id="PRU00114"/>
    </source>
</evidence>
<evidence type="ECO:0000269" key="3">
    <source>
    </source>
</evidence>
<evidence type="ECO:0000269" key="4">
    <source>
    </source>
</evidence>
<evidence type="ECO:0000269" key="5">
    <source>
    </source>
</evidence>
<evidence type="ECO:0000269" key="6">
    <source>
    </source>
</evidence>
<evidence type="ECO:0000269" key="7">
    <source>
    </source>
</evidence>
<evidence type="ECO:0000303" key="8">
    <source>
    </source>
</evidence>
<evidence type="ECO:0000303" key="9">
    <source>
    </source>
</evidence>
<evidence type="ECO:0000303" key="10">
    <source>
    </source>
</evidence>
<evidence type="ECO:0000303" key="11">
    <source>
    </source>
</evidence>
<evidence type="ECO:0000303" key="12">
    <source>
    </source>
</evidence>
<evidence type="ECO:0000303" key="13">
    <source ref="8"/>
</evidence>
<evidence type="ECO:0000305" key="14"/>
<evidence type="ECO:0000305" key="15">
    <source>
    </source>
</evidence>
<evidence type="ECO:0000305" key="16">
    <source>
    </source>
</evidence>
<evidence type="ECO:0000305" key="17">
    <source>
    </source>
</evidence>
<evidence type="ECO:0000305" key="18">
    <source>
    </source>
</evidence>
<organism>
    <name type="scientific">Homo sapiens</name>
    <name type="common">Human</name>
    <dbReference type="NCBI Taxonomy" id="9606"/>
    <lineage>
        <taxon>Eukaryota</taxon>
        <taxon>Metazoa</taxon>
        <taxon>Chordata</taxon>
        <taxon>Craniata</taxon>
        <taxon>Vertebrata</taxon>
        <taxon>Euteleostomi</taxon>
        <taxon>Mammalia</taxon>
        <taxon>Eutheria</taxon>
        <taxon>Euarchontoglires</taxon>
        <taxon>Primates</taxon>
        <taxon>Haplorrhini</taxon>
        <taxon>Catarrhini</taxon>
        <taxon>Hominidae</taxon>
        <taxon>Homo</taxon>
    </lineage>
</organism>
<sequence>MEFGLSWVFLVALLRGVQCQVQLVESGGGVVQPGRSLRLSCAASGFTFSSYGMHWVRQAPGKGLEWVAVISYDGSNKYYADSVKGRFTISRDNSKNTLYLQMNSLRAEDTAVYYCAK</sequence>
<name>HV330_HUMAN</name>
<gene>
    <name evidence="8 13" type="primary">IGHV3-30</name>
</gene>
<feature type="signal peptide" evidence="4 5 6 7">
    <location>
        <begin position="1"/>
        <end position="19"/>
    </location>
</feature>
<feature type="chain" id="PRO_0000059919" description="Immunoglobulin heavy variable 3-30" evidence="4 5 6 7">
    <location>
        <begin position="20"/>
        <end position="117"/>
    </location>
</feature>
<feature type="domain" description="Ig-like" evidence="2">
    <location>
        <begin position="20"/>
        <end position="117" status="greater than"/>
    </location>
</feature>
<feature type="region of interest" description="Framework-1" evidence="1">
    <location>
        <begin position="20"/>
        <end position="44"/>
    </location>
</feature>
<feature type="region of interest" description="Complementarity-determining-1" evidence="1">
    <location>
        <begin position="45"/>
        <end position="52"/>
    </location>
</feature>
<feature type="region of interest" description="Framework-2" evidence="1">
    <location>
        <begin position="53"/>
        <end position="69"/>
    </location>
</feature>
<feature type="region of interest" description="Complementarity-determining-2" evidence="1">
    <location>
        <begin position="70"/>
        <end position="77"/>
    </location>
</feature>
<feature type="region of interest" description="Framework-3" evidence="1">
    <location>
        <begin position="78"/>
        <end position="115"/>
    </location>
</feature>
<feature type="region of interest" description="Complementarity-determining-3" evidence="1">
    <location>
        <begin position="116"/>
        <end position="117" status="greater than"/>
    </location>
</feature>
<feature type="modified residue" description="Pyrrolidone carboxylic acid" evidence="4 5 6 7">
    <location>
        <position position="20"/>
    </location>
</feature>
<feature type="disulfide bond" evidence="2 3">
    <location>
        <begin position="41"/>
        <end position="115"/>
    </location>
</feature>
<feature type="sequence conflict" description="In Ref. 5; AA sequence." evidence="14" ref="5">
    <original>Q</original>
    <variation>E</variation>
    <location>
        <position position="22"/>
    </location>
</feature>
<feature type="sequence conflict" description="In Ref. 3; AA sequence." evidence="14" ref="3">
    <original>E</original>
    <variation>Q</variation>
    <location>
        <position position="25"/>
    </location>
</feature>
<feature type="sequence conflict" description="In Ref. 2; AA sequence." evidence="14" ref="2">
    <original>V</original>
    <variation>A</variation>
    <location>
        <position position="30"/>
    </location>
</feature>
<feature type="sequence conflict" description="In Ref. 4; AA sequence." evidence="14" ref="4">
    <original>PGR</original>
    <variation>AGT</variation>
    <location>
        <begin position="33"/>
        <end position="35"/>
    </location>
</feature>
<feature type="sequence conflict" description="In Ref. 4; AA sequence." evidence="14" ref="4">
    <original>A</original>
    <variation>T</variation>
    <location>
        <position position="42"/>
    </location>
</feature>
<feature type="sequence conflict" description="In Ref. 4; AA sequence." evidence="14" ref="4">
    <original>GFTFSS</original>
    <variation>AFNLSD</variation>
    <location>
        <begin position="45"/>
        <end position="50"/>
    </location>
</feature>
<feature type="sequence conflict" description="In Ref. 2; AA sequence." evidence="14" ref="2">
    <original>T</original>
    <variation>S</variation>
    <location>
        <position position="47"/>
    </location>
</feature>
<feature type="sequence conflict" description="In Ref. 3; AA sequence." evidence="14" ref="3">
    <original>SYGM</original>
    <variation>RYTI</variation>
    <location>
        <begin position="50"/>
        <end position="53"/>
    </location>
</feature>
<feature type="sequence conflict" description="In Ref. 5; AA sequence." evidence="14" ref="5">
    <original>S</original>
    <variation>N</variation>
    <location>
        <position position="50"/>
    </location>
</feature>
<feature type="sequence conflict" description="In Ref. 2; AA sequence." evidence="14" ref="2">
    <original>S</original>
    <variation>T</variation>
    <location>
        <position position="50"/>
    </location>
</feature>
<feature type="sequence conflict" description="In Ref. 2; AA sequence, 5; AA sequence and 4; AA sequence." evidence="14" ref="2 5 4">
    <original>G</original>
    <variation>A</variation>
    <location>
        <position position="52"/>
    </location>
</feature>
<feature type="sequence conflict" description="In Ref. 5; AA sequence." evidence="14" ref="5">
    <original>A</original>
    <variation>P</variation>
    <location>
        <position position="59"/>
    </location>
</feature>
<feature type="sequence conflict" description="In Ref. 2; AA sequence." evidence="14" ref="2">
    <original>VA</original>
    <variation>LS</variation>
    <location>
        <begin position="67"/>
        <end position="68"/>
    </location>
</feature>
<feature type="sequence conflict" description="In Ref. 4; AA sequence." evidence="14" ref="4">
    <original>V</original>
    <variation>L</variation>
    <location>
        <position position="69"/>
    </location>
</feature>
<feature type="sequence conflict" description="In Ref. 3; AA sequence." evidence="14" ref="3">
    <original>I</original>
    <variation>M</variation>
    <location>
        <position position="70"/>
    </location>
</feature>
<feature type="sequence conflict" description="In Ref. 4; AA sequence." evidence="14" ref="4">
    <original>D</original>
    <variation>G</variation>
    <location>
        <position position="73"/>
    </location>
</feature>
<feature type="sequence conflict" description="In Ref. 2; AA sequence, 5; AA sequence and 3; AA sequence." evidence="14" ref="2 5 3">
    <original>S</original>
    <variation>B</variation>
    <location>
        <position position="75"/>
    </location>
</feature>
<feature type="sequence conflict" description="In Ref. 4; AA sequence." evidence="14" ref="4">
    <original>K</original>
    <variation>T</variation>
    <location>
        <position position="77"/>
    </location>
</feature>
<feature type="sequence conflict" description="In Ref. 2; AA sequence." evidence="14" ref="2">
    <original>K</original>
    <variation>Z</variation>
    <location>
        <position position="77"/>
    </location>
</feature>
<feature type="sequence conflict" description="In Ref. 3; AA sequence." evidence="14" ref="3">
    <original>Y</original>
    <variation>H</variation>
    <location>
        <position position="78"/>
    </location>
</feature>
<feature type="sequence conflict" description="In Ref. 2; AA sequence." evidence="14" ref="2">
    <original>D</original>
    <variation>A</variation>
    <location>
        <position position="81"/>
    </location>
</feature>
<feature type="sequence conflict" description="In Ref. 3; AA sequence." evidence="14" ref="3">
    <original>K</original>
    <variation>N</variation>
    <location>
        <position position="84"/>
    </location>
</feature>
<feature type="sequence conflict" description="In Ref. 4; AA sequence." evidence="14" ref="4">
    <original>K</original>
    <variation>R</variation>
    <location>
        <position position="84"/>
    </location>
</feature>
<feature type="sequence conflict" description="In Ref. 3; AA sequence." evidence="14" ref="3">
    <original>DN</original>
    <variation>ND</variation>
    <location>
        <begin position="92"/>
        <end position="93"/>
    </location>
</feature>
<feature type="sequence conflict" description="In Ref. 4; AA sequence." evidence="14" ref="4">
    <original>N</original>
    <variation>I</variation>
    <location>
        <position position="93"/>
    </location>
</feature>
<feature type="sequence conflict" description="In Ref. 2; AA sequence." evidence="14" ref="2">
    <original>L</original>
    <variation>M</variation>
    <location>
        <position position="98"/>
    </location>
</feature>
<feature type="sequence conflict" description="In Ref. 2; AA sequence." evidence="14" ref="2">
    <original>Q</original>
    <variation>E</variation>
    <location>
        <position position="101"/>
    </location>
</feature>
<feature type="sequence conflict" description="In Ref. 3; AA sequence." evidence="14" ref="3">
    <original>Q</original>
    <variation>N</variation>
    <location>
        <position position="101"/>
    </location>
</feature>
<feature type="sequence conflict" description="In Ref. 4; AA sequence." evidence="14" ref="4">
    <original>NS</original>
    <variation>KT</variation>
    <location>
        <begin position="103"/>
        <end position="104"/>
    </location>
</feature>
<feature type="sequence conflict" description="In Ref. 3; AA sequence." evidence="14" ref="3">
    <original>A</original>
    <variation>P</variation>
    <location>
        <position position="107"/>
    </location>
</feature>
<feature type="sequence conflict" description="In Ref. 4; AA sequence." evidence="14" ref="4">
    <original>A</original>
    <variation>T</variation>
    <location>
        <position position="107"/>
    </location>
</feature>
<feature type="sequence conflict" description="In Ref. 2; AA sequence." evidence="14" ref="2">
    <original>D</original>
    <variation>N</variation>
    <location>
        <position position="109"/>
    </location>
</feature>
<feature type="sequence conflict" description="In Ref. 5; AA sequence, 2; AA sequence and 3; AA sequence." evidence="14" ref="5 2 3">
    <original>K</original>
    <variation>R</variation>
    <location>
        <position position="117"/>
    </location>
</feature>
<feature type="non-terminal residue">
    <location>
        <position position="117"/>
    </location>
</feature>
<protein>
    <recommendedName>
        <fullName evidence="8 13">Immunoglobulin heavy variable 3-30</fullName>
    </recommendedName>
    <alternativeName>
        <fullName evidence="15">Ig heavy chain V-III region BUR</fullName>
    </alternativeName>
    <alternativeName>
        <fullName evidence="17">Ig heavy chain V-III region CAM</fullName>
    </alternativeName>
    <alternativeName>
        <fullName evidence="16">Ig heavy chain V-III region GA</fullName>
    </alternativeName>
    <alternativeName>
        <fullName evidence="18">Ig heavy chain V-III region NIE</fullName>
    </alternativeName>
</protein>
<dbReference type="EMBL" id="AC245166">
    <property type="status" value="NOT_ANNOTATED_CDS"/>
    <property type="molecule type" value="Genomic_DNA"/>
</dbReference>
<dbReference type="PIR" id="A02051">
    <property type="entry name" value="M3HUAM"/>
</dbReference>
<dbReference type="PIR" id="A02052">
    <property type="entry name" value="M3HUGA"/>
</dbReference>
<dbReference type="PIR" id="A02056">
    <property type="entry name" value="A1HUBR"/>
</dbReference>
<dbReference type="PIR" id="A91668">
    <property type="entry name" value="G1HUNI"/>
</dbReference>
<dbReference type="SMR" id="P01768"/>
<dbReference type="FunCoup" id="P01768">
    <property type="interactions" value="408"/>
</dbReference>
<dbReference type="DrugBank" id="DB08396">
    <property type="generic name" value="4-{[(Z)-(5-oxo-2-phenyl-1,3-oxazol-4(5H)-ylidene)methyl]amino}butanoic acid"/>
</dbReference>
<dbReference type="DrugBank" id="DB08635">
    <property type="generic name" value="N-(TRANS-4'-NITRO-4-STILBENYL)-N-METHYL-5-AMINO-PENTANOIC ACID"/>
</dbReference>
<dbReference type="IMGT_GENE-DB" id="IGHV3-30"/>
<dbReference type="BioMuta" id="IGHV3-30"/>
<dbReference type="DMDM" id="123848"/>
<dbReference type="jPOST" id="P01768"/>
<dbReference type="MassIVE" id="P01768"/>
<dbReference type="Ensembl" id="ENST00000603660.1">
    <property type="protein sequence ID" value="ENSP00000474524.1"/>
    <property type="gene ID" value="ENSG00000270550.1"/>
</dbReference>
<dbReference type="Ensembl" id="ENST00000633400.1">
    <property type="protein sequence ID" value="ENSP00000488205.1"/>
    <property type="gene ID" value="ENSG00000282777.1"/>
</dbReference>
<dbReference type="AGR" id="HGNC:5591"/>
<dbReference type="GeneCards" id="IGHV3-30"/>
<dbReference type="HGNC" id="HGNC:5591">
    <property type="gene designation" value="IGHV3-30"/>
</dbReference>
<dbReference type="HPA" id="ENSG00000270550">
    <property type="expression patterns" value="Tissue enhanced (intestine, lymphoid tissue, stomach)"/>
</dbReference>
<dbReference type="neXtProt" id="NX_P01768"/>
<dbReference type="OpenTargets" id="ENSG00000270550"/>
<dbReference type="VEuPathDB" id="HostDB:ENSG00000270550"/>
<dbReference type="InParanoid" id="P01768"/>
<dbReference type="OMA" id="WVASIAT"/>
<dbReference type="OrthoDB" id="9945861at2759"/>
<dbReference type="PAN-GO" id="P01768">
    <property type="GO annotations" value="11 GO annotations based on evolutionary models"/>
</dbReference>
<dbReference type="PhylomeDB" id="P01768"/>
<dbReference type="PathwayCommons" id="P01768"/>
<dbReference type="Reactome" id="R-HSA-166663">
    <property type="pathway name" value="Initial triggering of complement"/>
</dbReference>
<dbReference type="Reactome" id="R-HSA-173623">
    <property type="pathway name" value="Classical antibody-mediated complement activation"/>
</dbReference>
<dbReference type="Reactome" id="R-HSA-198933">
    <property type="pathway name" value="Immunoregulatory interactions between a Lymphoid and a non-Lymphoid cell"/>
</dbReference>
<dbReference type="Reactome" id="R-HSA-202733">
    <property type="pathway name" value="Cell surface interactions at the vascular wall"/>
</dbReference>
<dbReference type="Reactome" id="R-HSA-2029481">
    <property type="pathway name" value="FCGR activation"/>
</dbReference>
<dbReference type="Reactome" id="R-HSA-2029482">
    <property type="pathway name" value="Regulation of actin dynamics for phagocytic cup formation"/>
</dbReference>
<dbReference type="Reactome" id="R-HSA-2029485">
    <property type="pathway name" value="Role of phospholipids in phagocytosis"/>
</dbReference>
<dbReference type="Reactome" id="R-HSA-2168880">
    <property type="pathway name" value="Scavenging of heme from plasma"/>
</dbReference>
<dbReference type="Reactome" id="R-HSA-2454202">
    <property type="pathway name" value="Fc epsilon receptor (FCERI) signaling"/>
</dbReference>
<dbReference type="Reactome" id="R-HSA-2730905">
    <property type="pathway name" value="Role of LAT2/NTAL/LAB on calcium mobilization"/>
</dbReference>
<dbReference type="Reactome" id="R-HSA-2871796">
    <property type="pathway name" value="FCERI mediated MAPK activation"/>
</dbReference>
<dbReference type="Reactome" id="R-HSA-2871809">
    <property type="pathway name" value="FCERI mediated Ca+2 mobilization"/>
</dbReference>
<dbReference type="Reactome" id="R-HSA-2871837">
    <property type="pathway name" value="FCERI mediated NF-kB activation"/>
</dbReference>
<dbReference type="Reactome" id="R-HSA-5690714">
    <property type="pathway name" value="CD22 mediated BCR regulation"/>
</dbReference>
<dbReference type="Reactome" id="R-HSA-9664323">
    <property type="pathway name" value="FCGR3A-mediated IL10 synthesis"/>
</dbReference>
<dbReference type="Reactome" id="R-HSA-9664422">
    <property type="pathway name" value="FCGR3A-mediated phagocytosis"/>
</dbReference>
<dbReference type="Reactome" id="R-HSA-9679191">
    <property type="pathway name" value="Potential therapeutics for SARS"/>
</dbReference>
<dbReference type="Reactome" id="R-HSA-977606">
    <property type="pathway name" value="Regulation of Complement cascade"/>
</dbReference>
<dbReference type="Reactome" id="R-HSA-983695">
    <property type="pathway name" value="Antigen activates B Cell Receptor (BCR) leading to generation of second messengers"/>
</dbReference>
<dbReference type="ChiTaRS" id="IGHV3-30">
    <property type="organism name" value="human"/>
</dbReference>
<dbReference type="Pharos" id="P01768">
    <property type="development level" value="Tdark"/>
</dbReference>
<dbReference type="PRO" id="PR:P01768"/>
<dbReference type="Proteomes" id="UP000005640">
    <property type="component" value="Chromosome 14"/>
</dbReference>
<dbReference type="RNAct" id="P01768">
    <property type="molecule type" value="protein"/>
</dbReference>
<dbReference type="Bgee" id="ENSG00000270550">
    <property type="expression patterns" value="Expressed in duodenum and 91 other cell types or tissues"/>
</dbReference>
<dbReference type="ExpressionAtlas" id="P01768">
    <property type="expression patterns" value="baseline and differential"/>
</dbReference>
<dbReference type="GO" id="GO:0005576">
    <property type="term" value="C:extracellular region"/>
    <property type="evidence" value="ECO:0000304"/>
    <property type="project" value="Reactome"/>
</dbReference>
<dbReference type="GO" id="GO:0005615">
    <property type="term" value="C:extracellular space"/>
    <property type="evidence" value="ECO:0007005"/>
    <property type="project" value="UniProtKB"/>
</dbReference>
<dbReference type="GO" id="GO:0019814">
    <property type="term" value="C:immunoglobulin complex"/>
    <property type="evidence" value="ECO:0007669"/>
    <property type="project" value="UniProtKB-KW"/>
</dbReference>
<dbReference type="GO" id="GO:0005886">
    <property type="term" value="C:plasma membrane"/>
    <property type="evidence" value="ECO:0000304"/>
    <property type="project" value="Reactome"/>
</dbReference>
<dbReference type="GO" id="GO:0003823">
    <property type="term" value="F:antigen binding"/>
    <property type="evidence" value="ECO:0000318"/>
    <property type="project" value="GO_Central"/>
</dbReference>
<dbReference type="GO" id="GO:0006955">
    <property type="term" value="P:immune response"/>
    <property type="evidence" value="ECO:0000303"/>
    <property type="project" value="UniProtKB"/>
</dbReference>
<dbReference type="GO" id="GO:0016064">
    <property type="term" value="P:immunoglobulin mediated immune response"/>
    <property type="evidence" value="ECO:0000318"/>
    <property type="project" value="GO_Central"/>
</dbReference>
<dbReference type="CDD" id="cd04981">
    <property type="entry name" value="IgV_H"/>
    <property type="match status" value="1"/>
</dbReference>
<dbReference type="FunFam" id="2.60.40.10:FF:000942">
    <property type="entry name" value="Immunoglobulin heavy variable 3-23"/>
    <property type="match status" value="1"/>
</dbReference>
<dbReference type="Gene3D" id="2.60.40.10">
    <property type="entry name" value="Immunoglobulins"/>
    <property type="match status" value="1"/>
</dbReference>
<dbReference type="InterPro" id="IPR007110">
    <property type="entry name" value="Ig-like_dom"/>
</dbReference>
<dbReference type="InterPro" id="IPR036179">
    <property type="entry name" value="Ig-like_dom_sf"/>
</dbReference>
<dbReference type="InterPro" id="IPR013783">
    <property type="entry name" value="Ig-like_fold"/>
</dbReference>
<dbReference type="InterPro" id="IPR013106">
    <property type="entry name" value="Ig_V-set"/>
</dbReference>
<dbReference type="InterPro" id="IPR050199">
    <property type="entry name" value="IgHV"/>
</dbReference>
<dbReference type="PANTHER" id="PTHR23266">
    <property type="entry name" value="IMMUNOGLOBULIN HEAVY CHAIN"/>
    <property type="match status" value="1"/>
</dbReference>
<dbReference type="Pfam" id="PF07686">
    <property type="entry name" value="V-set"/>
    <property type="match status" value="1"/>
</dbReference>
<dbReference type="SMART" id="SM00406">
    <property type="entry name" value="IGv"/>
    <property type="match status" value="1"/>
</dbReference>
<dbReference type="SUPFAM" id="SSF48726">
    <property type="entry name" value="Immunoglobulin"/>
    <property type="match status" value="1"/>
</dbReference>
<dbReference type="PROSITE" id="PS50835">
    <property type="entry name" value="IG_LIKE"/>
    <property type="match status" value="1"/>
</dbReference>